<accession>Q09264</accession>
<organism>
    <name type="scientific">Caenorhabditis elegans</name>
    <dbReference type="NCBI Taxonomy" id="6239"/>
    <lineage>
        <taxon>Eukaryota</taxon>
        <taxon>Metazoa</taxon>
        <taxon>Ecdysozoa</taxon>
        <taxon>Nematoda</taxon>
        <taxon>Chromadorea</taxon>
        <taxon>Rhabditida</taxon>
        <taxon>Rhabditina</taxon>
        <taxon>Rhabditomorpha</taxon>
        <taxon>Rhabditoidea</taxon>
        <taxon>Rhabditidae</taxon>
        <taxon>Peloderinae</taxon>
        <taxon>Caenorhabditis</taxon>
    </lineage>
</organism>
<gene>
    <name type="ORF">C32D5.4</name>
</gene>
<reference key="1">
    <citation type="journal article" date="1998" name="Science">
        <title>Genome sequence of the nematode C. elegans: a platform for investigating biology.</title>
        <authorList>
            <consortium name="The C. elegans sequencing consortium"/>
        </authorList>
    </citation>
    <scope>NUCLEOTIDE SEQUENCE [LARGE SCALE GENOMIC DNA]</scope>
    <source>
        <strain>Bristol N2</strain>
    </source>
</reference>
<name>YQD4_CAEEL</name>
<protein>
    <recommendedName>
        <fullName>Uncharacterized protein C32D5.4</fullName>
    </recommendedName>
</protein>
<keyword id="KW-1185">Reference proteome</keyword>
<proteinExistence type="predicted"/>
<sequence length="369" mass="42643">MYWNKNIKLKSKKDDKIMKSPRQQEWEKIHDVYFFLTINNTQGNCFETNIIFTATLFHSVTFQLRTSKRKNIDDWKKINQFLIISFSSKINIVRSMLKCKEDDFEVMTTPPEEAEMRENPNEMKRLLTHMSTTNTPFVVHDRTGLRLSFAGLLPITTGDNGEQRIWSSSIILNSAELEYPEVKYKLRVSVKKKFDPKLSCNRNKGTIKRNDVFVLTYQLPESSIEAVRLTLIVDGNPHEIPLCKYKKADYYWLGKETNVPGPTELLRERNVSPNTASTIKNVSPGRMIDLPEGLKNFVIGENGLESICKLLHPHAVSLFRDLSEMQISQCDMKGLVESGNSMDMIVEEIVKRFHDENRQKFTTTPALLQ</sequence>
<dbReference type="EMBL" id="FO080708">
    <property type="protein sequence ID" value="CCD66030.1"/>
    <property type="molecule type" value="Genomic_DNA"/>
</dbReference>
<dbReference type="PIR" id="T15733">
    <property type="entry name" value="T15733"/>
</dbReference>
<dbReference type="RefSeq" id="NP_495270.1">
    <property type="nucleotide sequence ID" value="NM_062869.4"/>
</dbReference>
<dbReference type="FunCoup" id="Q09264">
    <property type="interactions" value="811"/>
</dbReference>
<dbReference type="STRING" id="6239.C32D5.4.1"/>
<dbReference type="PaxDb" id="6239-C32D5.4"/>
<dbReference type="EnsemblMetazoa" id="C32D5.4.1">
    <property type="protein sequence ID" value="C32D5.4.1"/>
    <property type="gene ID" value="WBGene00016312"/>
</dbReference>
<dbReference type="GeneID" id="174043"/>
<dbReference type="KEGG" id="cel:CELE_C32D5.4"/>
<dbReference type="UCSC" id="C32D5.4">
    <property type="organism name" value="c. elegans"/>
</dbReference>
<dbReference type="AGR" id="WB:WBGene00016312"/>
<dbReference type="CTD" id="174043"/>
<dbReference type="WormBase" id="C32D5.4">
    <property type="protein sequence ID" value="CE01844"/>
    <property type="gene ID" value="WBGene00016312"/>
</dbReference>
<dbReference type="eggNOG" id="KOG1877">
    <property type="taxonomic scope" value="Eukaryota"/>
</dbReference>
<dbReference type="HOGENOM" id="CLU_063959_0_0_1"/>
<dbReference type="InParanoid" id="Q09264"/>
<dbReference type="OMA" id="HEVPLCK"/>
<dbReference type="OrthoDB" id="5786155at2759"/>
<dbReference type="PRO" id="PR:Q09264"/>
<dbReference type="Proteomes" id="UP000001940">
    <property type="component" value="Chromosome II"/>
</dbReference>
<dbReference type="Bgee" id="WBGene00016312">
    <property type="expression patterns" value="Expressed in adult organism and 1 other cell type or tissue"/>
</dbReference>
<feature type="chain" id="PRO_0000065216" description="Uncharacterized protein C32D5.4">
    <location>
        <begin position="1"/>
        <end position="369"/>
    </location>
</feature>